<sequence length="135" mass="14635">MKDNSLLKMDHEDTHLGKVEIAPEVIEVIAGIAASEVDGVAEMRGNFATGVVERFGKVNHGKGVKVDLADDGITIDVYCVVTFGVSIPKVAASVQENIRQTLLNMTSLSINEINIHIVGIQFDTKAQEVQIDEEM</sequence>
<keyword id="KW-1185">Reference proteome</keyword>
<gene>
    <name type="primary">yqhY</name>
    <name type="ordered locus">BSU24330</name>
</gene>
<evidence type="ECO:0000305" key="1"/>
<comment type="similarity">
    <text evidence="1">Belongs to the asp23 family.</text>
</comment>
<protein>
    <recommendedName>
        <fullName>Uncharacterized protein YqhY</fullName>
    </recommendedName>
</protein>
<accession>P54519</accession>
<reference key="1">
    <citation type="journal article" date="1996" name="Microbiology">
        <title>Systematic sequencing of the 283 kb 210 degrees-232 degrees region of the Bacillus subtilis genome containing the skin element and many sporulation genes.</title>
        <authorList>
            <person name="Mizuno M."/>
            <person name="Masuda S."/>
            <person name="Takemaru K."/>
            <person name="Hosono S."/>
            <person name="Sato T."/>
            <person name="Takeuchi M."/>
            <person name="Kobayashi Y."/>
        </authorList>
    </citation>
    <scope>NUCLEOTIDE SEQUENCE [GENOMIC DNA]</scope>
    <source>
        <strain>168 / JH642</strain>
    </source>
</reference>
<reference key="2">
    <citation type="journal article" date="1997" name="Nature">
        <title>The complete genome sequence of the Gram-positive bacterium Bacillus subtilis.</title>
        <authorList>
            <person name="Kunst F."/>
            <person name="Ogasawara N."/>
            <person name="Moszer I."/>
            <person name="Albertini A.M."/>
            <person name="Alloni G."/>
            <person name="Azevedo V."/>
            <person name="Bertero M.G."/>
            <person name="Bessieres P."/>
            <person name="Bolotin A."/>
            <person name="Borchert S."/>
            <person name="Borriss R."/>
            <person name="Boursier L."/>
            <person name="Brans A."/>
            <person name="Braun M."/>
            <person name="Brignell S.C."/>
            <person name="Bron S."/>
            <person name="Brouillet S."/>
            <person name="Bruschi C.V."/>
            <person name="Caldwell B."/>
            <person name="Capuano V."/>
            <person name="Carter N.M."/>
            <person name="Choi S.-K."/>
            <person name="Codani J.-J."/>
            <person name="Connerton I.F."/>
            <person name="Cummings N.J."/>
            <person name="Daniel R.A."/>
            <person name="Denizot F."/>
            <person name="Devine K.M."/>
            <person name="Duesterhoeft A."/>
            <person name="Ehrlich S.D."/>
            <person name="Emmerson P.T."/>
            <person name="Entian K.-D."/>
            <person name="Errington J."/>
            <person name="Fabret C."/>
            <person name="Ferrari E."/>
            <person name="Foulger D."/>
            <person name="Fritz C."/>
            <person name="Fujita M."/>
            <person name="Fujita Y."/>
            <person name="Fuma S."/>
            <person name="Galizzi A."/>
            <person name="Galleron N."/>
            <person name="Ghim S.-Y."/>
            <person name="Glaser P."/>
            <person name="Goffeau A."/>
            <person name="Golightly E.J."/>
            <person name="Grandi G."/>
            <person name="Guiseppi G."/>
            <person name="Guy B.J."/>
            <person name="Haga K."/>
            <person name="Haiech J."/>
            <person name="Harwood C.R."/>
            <person name="Henaut A."/>
            <person name="Hilbert H."/>
            <person name="Holsappel S."/>
            <person name="Hosono S."/>
            <person name="Hullo M.-F."/>
            <person name="Itaya M."/>
            <person name="Jones L.-M."/>
            <person name="Joris B."/>
            <person name="Karamata D."/>
            <person name="Kasahara Y."/>
            <person name="Klaerr-Blanchard M."/>
            <person name="Klein C."/>
            <person name="Kobayashi Y."/>
            <person name="Koetter P."/>
            <person name="Koningstein G."/>
            <person name="Krogh S."/>
            <person name="Kumano M."/>
            <person name="Kurita K."/>
            <person name="Lapidus A."/>
            <person name="Lardinois S."/>
            <person name="Lauber J."/>
            <person name="Lazarevic V."/>
            <person name="Lee S.-M."/>
            <person name="Levine A."/>
            <person name="Liu H."/>
            <person name="Masuda S."/>
            <person name="Mauel C."/>
            <person name="Medigue C."/>
            <person name="Medina N."/>
            <person name="Mellado R.P."/>
            <person name="Mizuno M."/>
            <person name="Moestl D."/>
            <person name="Nakai S."/>
            <person name="Noback M."/>
            <person name="Noone D."/>
            <person name="O'Reilly M."/>
            <person name="Ogawa K."/>
            <person name="Ogiwara A."/>
            <person name="Oudega B."/>
            <person name="Park S.-H."/>
            <person name="Parro V."/>
            <person name="Pohl T.M."/>
            <person name="Portetelle D."/>
            <person name="Porwollik S."/>
            <person name="Prescott A.M."/>
            <person name="Presecan E."/>
            <person name="Pujic P."/>
            <person name="Purnelle B."/>
            <person name="Rapoport G."/>
            <person name="Rey M."/>
            <person name="Reynolds S."/>
            <person name="Rieger M."/>
            <person name="Rivolta C."/>
            <person name="Rocha E."/>
            <person name="Roche B."/>
            <person name="Rose M."/>
            <person name="Sadaie Y."/>
            <person name="Sato T."/>
            <person name="Scanlan E."/>
            <person name="Schleich S."/>
            <person name="Schroeter R."/>
            <person name="Scoffone F."/>
            <person name="Sekiguchi J."/>
            <person name="Sekowska A."/>
            <person name="Seror S.J."/>
            <person name="Serror P."/>
            <person name="Shin B.-S."/>
            <person name="Soldo B."/>
            <person name="Sorokin A."/>
            <person name="Tacconi E."/>
            <person name="Takagi T."/>
            <person name="Takahashi H."/>
            <person name="Takemaru K."/>
            <person name="Takeuchi M."/>
            <person name="Tamakoshi A."/>
            <person name="Tanaka T."/>
            <person name="Terpstra P."/>
            <person name="Tognoni A."/>
            <person name="Tosato V."/>
            <person name="Uchiyama S."/>
            <person name="Vandenbol M."/>
            <person name="Vannier F."/>
            <person name="Vassarotti A."/>
            <person name="Viari A."/>
            <person name="Wambutt R."/>
            <person name="Wedler E."/>
            <person name="Wedler H."/>
            <person name="Weitzenegger T."/>
            <person name="Winters P."/>
            <person name="Wipat A."/>
            <person name="Yamamoto H."/>
            <person name="Yamane K."/>
            <person name="Yasumoto K."/>
            <person name="Yata K."/>
            <person name="Yoshida K."/>
            <person name="Yoshikawa H.-F."/>
            <person name="Zumstein E."/>
            <person name="Yoshikawa H."/>
            <person name="Danchin A."/>
        </authorList>
    </citation>
    <scope>NUCLEOTIDE SEQUENCE [LARGE SCALE GENOMIC DNA]</scope>
    <source>
        <strain>168</strain>
    </source>
</reference>
<reference key="3">
    <citation type="journal article" date="2009" name="Microbiology">
        <title>From a consortium sequence to a unified sequence: the Bacillus subtilis 168 reference genome a decade later.</title>
        <authorList>
            <person name="Barbe V."/>
            <person name="Cruveiller S."/>
            <person name="Kunst F."/>
            <person name="Lenoble P."/>
            <person name="Meurice G."/>
            <person name="Sekowska A."/>
            <person name="Vallenet D."/>
            <person name="Wang T."/>
            <person name="Moszer I."/>
            <person name="Medigue C."/>
            <person name="Danchin A."/>
        </authorList>
    </citation>
    <scope>SEQUENCE REVISION TO 41 AND 48</scope>
</reference>
<feature type="chain" id="PRO_0000170485" description="Uncharacterized protein YqhY">
    <location>
        <begin position="1"/>
        <end position="135"/>
    </location>
</feature>
<feature type="sequence conflict" description="In Ref. 1; BAA12570." evidence="1" ref="1">
    <original>A</original>
    <variation>P</variation>
    <location>
        <position position="41"/>
    </location>
</feature>
<feature type="sequence conflict" description="In Ref. 1; BAA12570." evidence="1" ref="1">
    <original>A</original>
    <variation>P</variation>
    <location>
        <position position="48"/>
    </location>
</feature>
<proteinExistence type="inferred from homology"/>
<name>YQHY_BACSU</name>
<organism>
    <name type="scientific">Bacillus subtilis (strain 168)</name>
    <dbReference type="NCBI Taxonomy" id="224308"/>
    <lineage>
        <taxon>Bacteria</taxon>
        <taxon>Bacillati</taxon>
        <taxon>Bacillota</taxon>
        <taxon>Bacilli</taxon>
        <taxon>Bacillales</taxon>
        <taxon>Bacillaceae</taxon>
        <taxon>Bacillus</taxon>
    </lineage>
</organism>
<dbReference type="EMBL" id="D84432">
    <property type="protein sequence ID" value="BAA12570.1"/>
    <property type="molecule type" value="Genomic_DNA"/>
</dbReference>
<dbReference type="EMBL" id="AL009126">
    <property type="protein sequence ID" value="CAB14364.2"/>
    <property type="molecule type" value="Genomic_DNA"/>
</dbReference>
<dbReference type="PIR" id="E69960">
    <property type="entry name" value="E69960"/>
</dbReference>
<dbReference type="RefSeq" id="NP_390313.2">
    <property type="nucleotide sequence ID" value="NC_000964.3"/>
</dbReference>
<dbReference type="RefSeq" id="WP_003230254.1">
    <property type="nucleotide sequence ID" value="NZ_OZ025638.1"/>
</dbReference>
<dbReference type="SMR" id="P54519"/>
<dbReference type="FunCoup" id="P54519">
    <property type="interactions" value="27"/>
</dbReference>
<dbReference type="STRING" id="224308.BSU24330"/>
<dbReference type="jPOST" id="P54519"/>
<dbReference type="PaxDb" id="224308-BSU24330"/>
<dbReference type="EnsemblBacteria" id="CAB14364">
    <property type="protein sequence ID" value="CAB14364"/>
    <property type="gene ID" value="BSU_24330"/>
</dbReference>
<dbReference type="GeneID" id="86873020"/>
<dbReference type="GeneID" id="938598"/>
<dbReference type="KEGG" id="bsu:BSU24330"/>
<dbReference type="PATRIC" id="fig|224308.179.peg.2651"/>
<dbReference type="eggNOG" id="COG1302">
    <property type="taxonomic scope" value="Bacteria"/>
</dbReference>
<dbReference type="InParanoid" id="P54519"/>
<dbReference type="OrthoDB" id="9793465at2"/>
<dbReference type="PhylomeDB" id="P54519"/>
<dbReference type="BioCyc" id="BSUB:BSU24330-MONOMER"/>
<dbReference type="Proteomes" id="UP000001570">
    <property type="component" value="Chromosome"/>
</dbReference>
<dbReference type="InterPro" id="IPR005531">
    <property type="entry name" value="Asp23"/>
</dbReference>
<dbReference type="PANTHER" id="PTHR34297:SF1">
    <property type="entry name" value="ASP23_GLS24 FAMILY ENVELOPE STRESS RESPONSE PROTEIN"/>
    <property type="match status" value="1"/>
</dbReference>
<dbReference type="PANTHER" id="PTHR34297">
    <property type="entry name" value="HYPOTHETICAL CYTOSOLIC PROTEIN-RELATED"/>
    <property type="match status" value="1"/>
</dbReference>
<dbReference type="Pfam" id="PF03780">
    <property type="entry name" value="Asp23"/>
    <property type="match status" value="1"/>
</dbReference>